<feature type="signal peptide">
    <location>
        <begin position="1"/>
        <end position="24"/>
    </location>
</feature>
<feature type="chain" id="PRO_0000006543" description="Cytochrome c-554" evidence="2">
    <location>
        <begin position="25"/>
        <end position="235"/>
    </location>
</feature>
<feature type="region of interest" description="Disordered" evidence="1">
    <location>
        <begin position="121"/>
        <end position="144"/>
    </location>
</feature>
<feature type="binding site" description="covalent" evidence="2">
    <location>
        <position position="35"/>
    </location>
    <ligand>
        <name>heme</name>
        <dbReference type="ChEBI" id="CHEBI:30413"/>
        <label>1</label>
    </ligand>
</feature>
<feature type="binding site" description="covalent" evidence="2">
    <location>
        <position position="38"/>
    </location>
    <ligand>
        <name>heme</name>
        <dbReference type="ChEBI" id="CHEBI:30413"/>
        <label>1</label>
    </ligand>
</feature>
<feature type="binding site" description="axial binding residue">
    <location>
        <position position="39"/>
    </location>
    <ligand>
        <name>heme</name>
        <dbReference type="ChEBI" id="CHEBI:30413"/>
        <label>1</label>
    </ligand>
    <ligandPart>
        <name>Fe</name>
        <dbReference type="ChEBI" id="CHEBI:18248"/>
    </ligandPart>
</feature>
<feature type="binding site" description="axial binding residue">
    <location>
        <position position="51"/>
    </location>
    <ligand>
        <name>heme</name>
        <dbReference type="ChEBI" id="CHEBI:30413"/>
        <label>4</label>
    </ligand>
    <ligandPart>
        <name>Fe</name>
        <dbReference type="ChEBI" id="CHEBI:18248"/>
    </ligandPart>
</feature>
<feature type="binding site" description="covalent">
    <location>
        <position position="84"/>
    </location>
    <ligand>
        <name>heme</name>
        <dbReference type="ChEBI" id="CHEBI:30413"/>
        <label>2</label>
    </ligand>
</feature>
<feature type="binding site" description="covalent">
    <location>
        <position position="87"/>
    </location>
    <ligand>
        <name>heme</name>
        <dbReference type="ChEBI" id="CHEBI:30413"/>
        <label>2</label>
    </ligand>
</feature>
<feature type="binding site" description="axial binding residue">
    <location>
        <position position="88"/>
    </location>
    <ligand>
        <name>heme</name>
        <dbReference type="ChEBI" id="CHEBI:30413"/>
        <label>2</label>
    </ligand>
    <ligandPart>
        <name>Fe</name>
        <dbReference type="ChEBI" id="CHEBI:18248"/>
    </ligandPart>
</feature>
<feature type="binding site" description="covalent" evidence="2">
    <location>
        <position position="112"/>
    </location>
    <ligand>
        <name>heme</name>
        <dbReference type="ChEBI" id="CHEBI:30413"/>
        <label>3</label>
    </ligand>
</feature>
<feature type="binding site" description="covalent" evidence="2">
    <location>
        <position position="115"/>
    </location>
    <ligand>
        <name>heme</name>
        <dbReference type="ChEBI" id="CHEBI:30413"/>
        <label>3</label>
    </ligand>
</feature>
<feature type="binding site" description="axial binding residue">
    <location>
        <position position="116"/>
    </location>
    <ligand>
        <name>heme</name>
        <dbReference type="ChEBI" id="CHEBI:30413"/>
        <label>3</label>
    </ligand>
    <ligandPart>
        <name>Fe</name>
        <dbReference type="ChEBI" id="CHEBI:18248"/>
    </ligandPart>
</feature>
<feature type="binding site" description="axial binding residue">
    <location>
        <position position="126"/>
    </location>
    <ligand>
        <name>heme</name>
        <dbReference type="ChEBI" id="CHEBI:30413"/>
        <label>1</label>
    </ligand>
    <ligandPart>
        <name>Fe</name>
        <dbReference type="ChEBI" id="CHEBI:18248"/>
    </ligandPart>
</feature>
<feature type="binding site" description="covalent" evidence="2">
    <location>
        <position position="158"/>
    </location>
    <ligand>
        <name>heme</name>
        <dbReference type="ChEBI" id="CHEBI:30413"/>
        <label>4</label>
    </ligand>
</feature>
<feature type="binding site" description="covalent" evidence="2">
    <location>
        <position position="161"/>
    </location>
    <ligand>
        <name>heme</name>
        <dbReference type="ChEBI" id="CHEBI:30413"/>
        <label>4</label>
    </ligand>
</feature>
<feature type="binding site" description="axial binding residue">
    <location>
        <position position="162"/>
    </location>
    <ligand>
        <name>heme</name>
        <dbReference type="ChEBI" id="CHEBI:30413"/>
        <label>4</label>
    </ligand>
    <ligandPart>
        <name>Fe</name>
        <dbReference type="ChEBI" id="CHEBI:18248"/>
    </ligandPart>
</feature>
<feature type="binding site" description="axial binding residue">
    <location>
        <position position="203"/>
    </location>
    <ligand>
        <name>heme</name>
        <dbReference type="ChEBI" id="CHEBI:30413"/>
        <label>3</label>
    </ligand>
    <ligandPart>
        <name>Fe</name>
        <dbReference type="ChEBI" id="CHEBI:18248"/>
    </ligandPart>
</feature>
<feature type="helix" evidence="3">
    <location>
        <begin position="33"/>
        <end position="38"/>
    </location>
</feature>
<feature type="helix" evidence="3">
    <location>
        <begin position="40"/>
        <end position="46"/>
    </location>
</feature>
<feature type="helix" evidence="3">
    <location>
        <begin position="51"/>
        <end position="53"/>
    </location>
</feature>
<feature type="helix" evidence="3">
    <location>
        <begin position="56"/>
        <end position="58"/>
    </location>
</feature>
<feature type="helix" evidence="3">
    <location>
        <begin position="64"/>
        <end position="69"/>
    </location>
</feature>
<feature type="turn" evidence="3">
    <location>
        <begin position="82"/>
        <end position="84"/>
    </location>
</feature>
<feature type="helix" evidence="3">
    <location>
        <begin position="85"/>
        <end position="87"/>
    </location>
</feature>
<feature type="strand" evidence="3">
    <location>
        <begin position="88"/>
        <end position="91"/>
    </location>
</feature>
<feature type="strand" evidence="3">
    <location>
        <begin position="100"/>
        <end position="102"/>
    </location>
</feature>
<feature type="helix" evidence="3">
    <location>
        <begin position="105"/>
        <end position="107"/>
    </location>
</feature>
<feature type="strand" evidence="3">
    <location>
        <begin position="108"/>
        <end position="110"/>
    </location>
</feature>
<feature type="helix" evidence="3">
    <location>
        <begin position="112"/>
        <end position="116"/>
    </location>
</feature>
<feature type="turn" evidence="3">
    <location>
        <begin position="120"/>
        <end position="122"/>
    </location>
</feature>
<feature type="helix" evidence="3">
    <location>
        <begin position="123"/>
        <end position="136"/>
    </location>
</feature>
<feature type="helix" evidence="3">
    <location>
        <begin position="142"/>
        <end position="147"/>
    </location>
</feature>
<feature type="helix" evidence="3">
    <location>
        <begin position="155"/>
        <end position="162"/>
    </location>
</feature>
<feature type="turn" evidence="3">
    <location>
        <begin position="182"/>
        <end position="184"/>
    </location>
</feature>
<feature type="helix" evidence="3">
    <location>
        <begin position="186"/>
        <end position="188"/>
    </location>
</feature>
<feature type="helix" evidence="3">
    <location>
        <begin position="192"/>
        <end position="195"/>
    </location>
</feature>
<feature type="turn" evidence="3">
    <location>
        <begin position="199"/>
        <end position="201"/>
    </location>
</feature>
<feature type="strand" evidence="3">
    <location>
        <begin position="212"/>
        <end position="216"/>
    </location>
</feature>
<feature type="helix" evidence="3">
    <location>
        <begin position="221"/>
        <end position="226"/>
    </location>
</feature>
<protein>
    <recommendedName>
        <fullName>Cytochrome c-554</fullName>
    </recommendedName>
    <alternativeName>
        <fullName>Cytochrome c554</fullName>
    </alternativeName>
    <alternativeName>
        <fullName>Hydroxylamine oxidoreductase-linked cytochrome</fullName>
    </alternativeName>
</protein>
<name>C554_NITEU</name>
<proteinExistence type="evidence at protein level"/>
<comment type="function">
    <text>Involved in ammonia oxidation; accepts electrons directly from hydroxylamine oxidoreductase (HAO).</text>
</comment>
<comment type="subcellular location">
    <subcellularLocation>
        <location>Periplasm</location>
    </subcellularLocation>
</comment>
<comment type="PTM">
    <text>Binds 4 heme groups per subunit.</text>
</comment>
<keyword id="KW-0002">3D-structure</keyword>
<keyword id="KW-0903">Direct protein sequencing</keyword>
<keyword id="KW-0249">Electron transport</keyword>
<keyword id="KW-0349">Heme</keyword>
<keyword id="KW-0408">Iron</keyword>
<keyword id="KW-0479">Metal-binding</keyword>
<keyword id="KW-0574">Periplasm</keyword>
<keyword id="KW-1185">Reference proteome</keyword>
<keyword id="KW-0732">Signal</keyword>
<keyword id="KW-0813">Transport</keyword>
<sequence>MKIMIACGLVAAALFTLTSGQSLAADAPFEGRKKCSSCHKAQAQSWKDTAHAKAMESLKPNVKKEAKQKAKLDPAKDYTQDKDCVGCHVDGFGQKGGYTIESPKPMLTGVGCESCHGPGRNFRGDHRKSGQAFEKSGKKTPRKDLAKKGQDFHFEERCSACHLNYEGSPWKGAKAPYTPFTPEVDAKYTFKFDEMVKEVKAMHEHYKLEGVFEGEPKFKFHDEFQASAKPAKKGK</sequence>
<accession>Q57142</accession>
<reference key="1">
    <citation type="journal article" date="1994" name="Gene">
        <title>Sequence of hcy, a gene encoding cytochrome c-554 from Nitrosomonas europaea.</title>
        <authorList>
            <person name="Hommes N.G."/>
            <person name="Sayavedra-Soto L.A."/>
            <person name="Arp D.J."/>
        </authorList>
    </citation>
    <scope>NUCLEOTIDE SEQUENCE [GENOMIC DNA]</scope>
    <scope>PARTIAL PROTEIN SEQUENCE</scope>
    <source>
        <strain>ATCC 19718 / CIP 103999 / KCTC 2705 / NBRC 14298</strain>
    </source>
</reference>
<reference key="2">
    <citation type="journal article" date="1994" name="J. Bacteriol.">
        <title>Organization of the hao gene cluster of Nitrosomonas europaea: genes for two tetraheme c cytochromes.</title>
        <authorList>
            <person name="Bergmann D.J."/>
            <person name="Arciero D.M."/>
            <person name="Hooper A.B."/>
        </authorList>
    </citation>
    <scope>NUCLEOTIDE SEQUENCE [GENOMIC DNA]</scope>
    <scope>PARTIAL PROTEIN SEQUENCE</scope>
    <source>
        <strain>ATCC 19718 / CIP 103999 / KCTC 2705 / NBRC 14298</strain>
    </source>
</reference>
<reference key="3">
    <citation type="journal article" date="2003" name="J. Bacteriol.">
        <title>Complete genome sequence of the ammonia-oxidizing bacterium and obligate chemolithoautotroph Nitrosomonas europaea.</title>
        <authorList>
            <person name="Chain P."/>
            <person name="Lamerdin J.E."/>
            <person name="Larimer F.W."/>
            <person name="Regala W."/>
            <person name="Lao V."/>
            <person name="Land M.L."/>
            <person name="Hauser L."/>
            <person name="Hooper A.B."/>
            <person name="Klotz M.G."/>
            <person name="Norton J."/>
            <person name="Sayavedra-Soto L.A."/>
            <person name="Arciero D.M."/>
            <person name="Hommes N.G."/>
            <person name="Whittaker M.M."/>
            <person name="Arp D.J."/>
        </authorList>
    </citation>
    <scope>NUCLEOTIDE SEQUENCE [LARGE SCALE GENOMIC DNA]</scope>
    <source>
        <strain>ATCC 19718 / CIP 103999 / KCTC 2705 / NBRC 14298</strain>
    </source>
</reference>
<reference key="4">
    <citation type="journal article" date="1998" name="Nat. Struct. Biol.">
        <title>Heme packing motifs revealed by the crystal structure of the tetraheme cytochrome c554 from Nitrosomonas europaea.</title>
        <authorList>
            <person name="Iverson T.M."/>
            <person name="Arciero D.M."/>
            <person name="Hsu B.T."/>
            <person name="Logan M.S.P."/>
            <person name="Hooper A.B."/>
            <person name="Rees D.C."/>
        </authorList>
    </citation>
    <scope>X-RAY CRYSTALLOGRAPHY (2.6 ANGSTROMS)</scope>
    <source>
        <strain>ATCC 19718 / CIP 103999 / KCTC 2705 / NBRC 14298</strain>
    </source>
</reference>
<reference key="5">
    <citation type="journal article" date="2001" name="J. Biol. Inorg. Chem.">
        <title>High-resolution structures of the oxidized and reduced states of cytochrome c554 from Nitrosomonas europaea.</title>
        <authorList>
            <person name="Iverson T.M."/>
            <person name="Arciero D.M."/>
            <person name="Hooper A.B."/>
            <person name="Rees D.C."/>
        </authorList>
    </citation>
    <scope>X-RAY CRYSTALLOGRAPHY (1.6 ANGSTROMS)</scope>
    <source>
        <strain>ATCC 19718 / CIP 103999 / KCTC 2705 / NBRC 14298</strain>
    </source>
</reference>
<evidence type="ECO:0000256" key="1">
    <source>
        <dbReference type="SAM" id="MobiDB-lite"/>
    </source>
</evidence>
<evidence type="ECO:0000269" key="2">
    <source>
    </source>
</evidence>
<evidence type="ECO:0007829" key="3">
    <source>
        <dbReference type="PDB" id="1FT5"/>
    </source>
</evidence>
<organism>
    <name type="scientific">Nitrosomonas europaea (strain ATCC 19718 / CIP 103999 / KCTC 2705 / NBRC 14298)</name>
    <dbReference type="NCBI Taxonomy" id="228410"/>
    <lineage>
        <taxon>Bacteria</taxon>
        <taxon>Pseudomonadati</taxon>
        <taxon>Pseudomonadota</taxon>
        <taxon>Betaproteobacteria</taxon>
        <taxon>Nitrosomonadales</taxon>
        <taxon>Nitrosomonadaceae</taxon>
        <taxon>Nitrosomonas</taxon>
    </lineage>
</organism>
<gene>
    <name type="primary">cycA1</name>
    <name type="synonym">cycA</name>
    <name type="synonym">hcy</name>
    <name type="ordered locus">NE2337</name>
</gene>
<gene>
    <name type="primary">cycA2</name>
    <name type="synonym">cycA</name>
    <name type="ordered locus">NE2042</name>
</gene>
<gene>
    <name type="primary">cycA3</name>
    <name type="synonym">cycA</name>
    <name type="ordered locus">NE0960</name>
</gene>
<dbReference type="EMBL" id="U05951">
    <property type="protein sequence ID" value="AAA60464.1"/>
    <property type="molecule type" value="Genomic_DNA"/>
</dbReference>
<dbReference type="EMBL" id="U08288">
    <property type="protein sequence ID" value="AAA19967.1"/>
    <property type="molecule type" value="Unassigned_DNA"/>
</dbReference>
<dbReference type="EMBL" id="AL954747">
    <property type="protein sequence ID" value="CAD84871.1"/>
    <property type="molecule type" value="Genomic_DNA"/>
</dbReference>
<dbReference type="EMBL" id="AL954747">
    <property type="protein sequence ID" value="CAD85953.1"/>
    <property type="molecule type" value="Genomic_DNA"/>
</dbReference>
<dbReference type="EMBL" id="AL954747">
    <property type="protein sequence ID" value="CAD86249.1"/>
    <property type="molecule type" value="Genomic_DNA"/>
</dbReference>
<dbReference type="PIR" id="A59036">
    <property type="entry name" value="A59036"/>
</dbReference>
<dbReference type="RefSeq" id="WP_011111569.1">
    <property type="nucleotide sequence ID" value="NC_004757.1"/>
</dbReference>
<dbReference type="PDB" id="1BVB">
    <property type="method" value="X-ray"/>
    <property type="resolution" value="2.60 A"/>
    <property type="chains" value="A=25-235"/>
</dbReference>
<dbReference type="PDB" id="1FT5">
    <property type="method" value="X-ray"/>
    <property type="resolution" value="1.60 A"/>
    <property type="chains" value="A=25-235"/>
</dbReference>
<dbReference type="PDB" id="1FT6">
    <property type="method" value="X-ray"/>
    <property type="resolution" value="1.80 A"/>
    <property type="chains" value="A=25-235"/>
</dbReference>
<dbReference type="PDBsum" id="1BVB"/>
<dbReference type="PDBsum" id="1FT5"/>
<dbReference type="PDBsum" id="1FT6"/>
<dbReference type="SMR" id="Q57142"/>
<dbReference type="STRING" id="228410.NE0960"/>
<dbReference type="GeneID" id="87105468"/>
<dbReference type="KEGG" id="neu:NE0960"/>
<dbReference type="KEGG" id="neu:NE2042"/>
<dbReference type="KEGG" id="neu:NE2337"/>
<dbReference type="eggNOG" id="COG0737">
    <property type="taxonomic scope" value="Bacteria"/>
</dbReference>
<dbReference type="HOGENOM" id="CLU_1179215_0_0_4"/>
<dbReference type="OrthoDB" id="9814800at2"/>
<dbReference type="PhylomeDB" id="Q57142"/>
<dbReference type="BioCyc" id="MetaCyc:MONOMER-17537"/>
<dbReference type="EvolutionaryTrace" id="Q57142"/>
<dbReference type="Proteomes" id="UP000001416">
    <property type="component" value="Chromosome"/>
</dbReference>
<dbReference type="GO" id="GO:0042597">
    <property type="term" value="C:periplasmic space"/>
    <property type="evidence" value="ECO:0007669"/>
    <property type="project" value="UniProtKB-SubCell"/>
</dbReference>
<dbReference type="GO" id="GO:0046872">
    <property type="term" value="F:metal ion binding"/>
    <property type="evidence" value="ECO:0007669"/>
    <property type="project" value="UniProtKB-KW"/>
</dbReference>
<dbReference type="Gene3D" id="1.10.1130.10">
    <property type="entry name" value="Flavocytochrome C3, Chain A"/>
    <property type="match status" value="1"/>
</dbReference>
<dbReference type="InterPro" id="IPR023155">
    <property type="entry name" value="Cyt_c-552/4"/>
</dbReference>
<dbReference type="InterPro" id="IPR053596">
    <property type="entry name" value="Cytochrome_c-554-like"/>
</dbReference>
<dbReference type="InterPro" id="IPR036280">
    <property type="entry name" value="Multihaem_cyt_sf"/>
</dbReference>
<dbReference type="NCBIfam" id="NF043010">
    <property type="entry name" value="Cyt554_Nsmonas"/>
    <property type="match status" value="1"/>
</dbReference>
<dbReference type="Pfam" id="PF13435">
    <property type="entry name" value="Cytochrome_C554"/>
    <property type="match status" value="1"/>
</dbReference>
<dbReference type="SUPFAM" id="SSF48695">
    <property type="entry name" value="Multiheme cytochromes"/>
    <property type="match status" value="1"/>
</dbReference>
<dbReference type="PROSITE" id="PS51008">
    <property type="entry name" value="MULTIHEME_CYTC"/>
    <property type="match status" value="1"/>
</dbReference>